<proteinExistence type="inferred from homology"/>
<keyword id="KW-0067">ATP-binding</keyword>
<keyword id="KW-1003">Cell membrane</keyword>
<keyword id="KW-0472">Membrane</keyword>
<keyword id="KW-0547">Nucleotide-binding</keyword>
<keyword id="KW-1185">Reference proteome</keyword>
<keyword id="KW-1278">Translocase</keyword>
<keyword id="KW-0813">Transport</keyword>
<sequence>MKQPIIVVENLYSSYDGKNYVLRNVSFTVNEGELFGILGPNGAGKSTLVLHLNGILKAKRGRVLVSGIDVRKNPREVRKLVGIVFQDPNDQLFCPTVREEVGFGPYNLGVRGKDLEDVVFNSLKLVGMEGYIDREIKSLSFGEKKRVAIAAILAMNPQIVIFDEPFANLDFKGKKLVWDVIKTLRKEGKTVIIVTHEAEYLLECDRILLLANGEVIRVGEPGEVLIPEILKRNNLDVPLIIELFFELGLELPKSLDDAKRVLKSKLKLG</sequence>
<feature type="chain" id="PRO_0000092158" description="Putative ABC transporter ATP-binding protein PF0528">
    <location>
        <begin position="1"/>
        <end position="269"/>
    </location>
</feature>
<feature type="domain" description="ABC transporter" evidence="2">
    <location>
        <begin position="6"/>
        <end position="237"/>
    </location>
</feature>
<feature type="binding site" evidence="2">
    <location>
        <begin position="39"/>
        <end position="46"/>
    </location>
    <ligand>
        <name>ATP</name>
        <dbReference type="ChEBI" id="CHEBI:30616"/>
    </ligand>
</feature>
<comment type="function">
    <text evidence="1">Probably part of an ABC transporter complex. Responsible for energy coupling to the transport system (By similarity).</text>
</comment>
<comment type="subcellular location">
    <subcellularLocation>
        <location evidence="1">Cell membrane</location>
        <topology evidence="1">Peripheral membrane protein</topology>
    </subcellularLocation>
</comment>
<comment type="similarity">
    <text evidence="3">Belongs to the ABC transporter superfamily.</text>
</comment>
<accession>Q8U3E0</accession>
<organism>
    <name type="scientific">Pyrococcus furiosus (strain ATCC 43587 / DSM 3638 / JCM 8422 / Vc1)</name>
    <dbReference type="NCBI Taxonomy" id="186497"/>
    <lineage>
        <taxon>Archaea</taxon>
        <taxon>Methanobacteriati</taxon>
        <taxon>Methanobacteriota</taxon>
        <taxon>Thermococci</taxon>
        <taxon>Thermococcales</taxon>
        <taxon>Thermococcaceae</taxon>
        <taxon>Pyrococcus</taxon>
    </lineage>
</organism>
<dbReference type="EC" id="7.-.-.-"/>
<dbReference type="EMBL" id="AE009950">
    <property type="protein sequence ID" value="AAL80652.1"/>
    <property type="molecule type" value="Genomic_DNA"/>
</dbReference>
<dbReference type="RefSeq" id="WP_011011645.1">
    <property type="nucleotide sequence ID" value="NZ_CP023154.1"/>
</dbReference>
<dbReference type="SMR" id="Q8U3E0"/>
<dbReference type="STRING" id="186497.PF0528"/>
<dbReference type="PaxDb" id="186497-PF0528"/>
<dbReference type="KEGG" id="pfu:PF0528"/>
<dbReference type="PATRIC" id="fig|186497.12.peg.552"/>
<dbReference type="eggNOG" id="arCOG00202">
    <property type="taxonomic scope" value="Archaea"/>
</dbReference>
<dbReference type="HOGENOM" id="CLU_000604_1_22_2"/>
<dbReference type="OrthoDB" id="18209at2157"/>
<dbReference type="PhylomeDB" id="Q8U3E0"/>
<dbReference type="Proteomes" id="UP000001013">
    <property type="component" value="Chromosome"/>
</dbReference>
<dbReference type="GO" id="GO:0043190">
    <property type="term" value="C:ATP-binding cassette (ABC) transporter complex"/>
    <property type="evidence" value="ECO:0007669"/>
    <property type="project" value="TreeGrafter"/>
</dbReference>
<dbReference type="GO" id="GO:0005524">
    <property type="term" value="F:ATP binding"/>
    <property type="evidence" value="ECO:0007669"/>
    <property type="project" value="UniProtKB-KW"/>
</dbReference>
<dbReference type="GO" id="GO:0016887">
    <property type="term" value="F:ATP hydrolysis activity"/>
    <property type="evidence" value="ECO:0007669"/>
    <property type="project" value="InterPro"/>
</dbReference>
<dbReference type="GO" id="GO:0042626">
    <property type="term" value="F:ATPase-coupled transmembrane transporter activity"/>
    <property type="evidence" value="ECO:0007669"/>
    <property type="project" value="TreeGrafter"/>
</dbReference>
<dbReference type="CDD" id="cd03225">
    <property type="entry name" value="ABC_cobalt_CbiO_domain1"/>
    <property type="match status" value="1"/>
</dbReference>
<dbReference type="FunFam" id="3.40.50.300:FF:000224">
    <property type="entry name" value="Energy-coupling factor transporter ATP-binding protein EcfA"/>
    <property type="match status" value="1"/>
</dbReference>
<dbReference type="Gene3D" id="3.40.50.300">
    <property type="entry name" value="P-loop containing nucleotide triphosphate hydrolases"/>
    <property type="match status" value="1"/>
</dbReference>
<dbReference type="InterPro" id="IPR003593">
    <property type="entry name" value="AAA+_ATPase"/>
</dbReference>
<dbReference type="InterPro" id="IPR003439">
    <property type="entry name" value="ABC_transporter-like_ATP-bd"/>
</dbReference>
<dbReference type="InterPro" id="IPR017871">
    <property type="entry name" value="ABC_transporter-like_CS"/>
</dbReference>
<dbReference type="InterPro" id="IPR015856">
    <property type="entry name" value="ABC_transpr_CbiO/EcfA_su"/>
</dbReference>
<dbReference type="InterPro" id="IPR050095">
    <property type="entry name" value="ECF_ABC_transporter_ATP-bd"/>
</dbReference>
<dbReference type="InterPro" id="IPR027417">
    <property type="entry name" value="P-loop_NTPase"/>
</dbReference>
<dbReference type="PANTHER" id="PTHR43553:SF24">
    <property type="entry name" value="ENERGY-COUPLING FACTOR TRANSPORTER ATP-BINDING PROTEIN ECFA1"/>
    <property type="match status" value="1"/>
</dbReference>
<dbReference type="PANTHER" id="PTHR43553">
    <property type="entry name" value="HEAVY METAL TRANSPORTER"/>
    <property type="match status" value="1"/>
</dbReference>
<dbReference type="Pfam" id="PF00005">
    <property type="entry name" value="ABC_tran"/>
    <property type="match status" value="1"/>
</dbReference>
<dbReference type="SMART" id="SM00382">
    <property type="entry name" value="AAA"/>
    <property type="match status" value="1"/>
</dbReference>
<dbReference type="SUPFAM" id="SSF52540">
    <property type="entry name" value="P-loop containing nucleoside triphosphate hydrolases"/>
    <property type="match status" value="1"/>
</dbReference>
<dbReference type="PROSITE" id="PS00211">
    <property type="entry name" value="ABC_TRANSPORTER_1"/>
    <property type="match status" value="1"/>
</dbReference>
<dbReference type="PROSITE" id="PS50893">
    <property type="entry name" value="ABC_TRANSPORTER_2"/>
    <property type="match status" value="1"/>
</dbReference>
<protein>
    <recommendedName>
        <fullName>Putative ABC transporter ATP-binding protein PF0528</fullName>
        <ecNumber>7.-.-.-</ecNumber>
    </recommendedName>
</protein>
<reference key="1">
    <citation type="journal article" date="1999" name="Genetics">
        <title>Divergence of the hyperthermophilic archaea Pyrococcus furiosus and P. horikoshii inferred from complete genomic sequences.</title>
        <authorList>
            <person name="Maeder D.L."/>
            <person name="Weiss R.B."/>
            <person name="Dunn D.M."/>
            <person name="Cherry J.L."/>
            <person name="Gonzalez J.M."/>
            <person name="DiRuggiero J."/>
            <person name="Robb F.T."/>
        </authorList>
    </citation>
    <scope>NUCLEOTIDE SEQUENCE [LARGE SCALE GENOMIC DNA]</scope>
    <source>
        <strain>ATCC 43587 / DSM 3638 / JCM 8422 / Vc1</strain>
    </source>
</reference>
<name>Y528_PYRFU</name>
<gene>
    <name type="ordered locus">PF0528</name>
</gene>
<evidence type="ECO:0000250" key="1"/>
<evidence type="ECO:0000255" key="2">
    <source>
        <dbReference type="PROSITE-ProRule" id="PRU00434"/>
    </source>
</evidence>
<evidence type="ECO:0000305" key="3"/>